<comment type="function">
    <text evidence="1">Catalyzes the attachment of serine to tRNA(Ser). Is also able to aminoacylate tRNA(Sec) with serine, to form the misacylated tRNA L-seryl-tRNA(Sec), which will be further converted into selenocysteinyl-tRNA(Sec).</text>
</comment>
<comment type="catalytic activity">
    <reaction evidence="1">
        <text>tRNA(Ser) + L-serine + ATP = L-seryl-tRNA(Ser) + AMP + diphosphate + H(+)</text>
        <dbReference type="Rhea" id="RHEA:12292"/>
        <dbReference type="Rhea" id="RHEA-COMP:9669"/>
        <dbReference type="Rhea" id="RHEA-COMP:9703"/>
        <dbReference type="ChEBI" id="CHEBI:15378"/>
        <dbReference type="ChEBI" id="CHEBI:30616"/>
        <dbReference type="ChEBI" id="CHEBI:33019"/>
        <dbReference type="ChEBI" id="CHEBI:33384"/>
        <dbReference type="ChEBI" id="CHEBI:78442"/>
        <dbReference type="ChEBI" id="CHEBI:78533"/>
        <dbReference type="ChEBI" id="CHEBI:456215"/>
        <dbReference type="EC" id="6.1.1.11"/>
    </reaction>
</comment>
<comment type="catalytic activity">
    <reaction evidence="1">
        <text>tRNA(Sec) + L-serine + ATP = L-seryl-tRNA(Sec) + AMP + diphosphate + H(+)</text>
        <dbReference type="Rhea" id="RHEA:42580"/>
        <dbReference type="Rhea" id="RHEA-COMP:9742"/>
        <dbReference type="Rhea" id="RHEA-COMP:10128"/>
        <dbReference type="ChEBI" id="CHEBI:15378"/>
        <dbReference type="ChEBI" id="CHEBI:30616"/>
        <dbReference type="ChEBI" id="CHEBI:33019"/>
        <dbReference type="ChEBI" id="CHEBI:33384"/>
        <dbReference type="ChEBI" id="CHEBI:78442"/>
        <dbReference type="ChEBI" id="CHEBI:78533"/>
        <dbReference type="ChEBI" id="CHEBI:456215"/>
        <dbReference type="EC" id="6.1.1.11"/>
    </reaction>
</comment>
<comment type="pathway">
    <text evidence="1">Aminoacyl-tRNA biosynthesis; selenocysteinyl-tRNA(Sec) biosynthesis; L-seryl-tRNA(Sec) from L-serine and tRNA(Sec): step 1/1.</text>
</comment>
<comment type="subunit">
    <text evidence="1">Homodimer. The tRNA molecule binds across the dimer.</text>
</comment>
<comment type="subcellular location">
    <subcellularLocation>
        <location evidence="1">Cytoplasm</location>
    </subcellularLocation>
</comment>
<comment type="domain">
    <text evidence="1">Consists of two distinct domains, a catalytic core and a N-terminal extension that is involved in tRNA binding.</text>
</comment>
<comment type="similarity">
    <text evidence="1">Belongs to the class-II aminoacyl-tRNA synthetase family. Type-1 seryl-tRNA synthetase subfamily.</text>
</comment>
<dbReference type="EC" id="6.1.1.11" evidence="1"/>
<dbReference type="EMBL" id="CP000879">
    <property type="protein sequence ID" value="ABX30851.1"/>
    <property type="molecule type" value="Genomic_DNA"/>
</dbReference>
<dbReference type="RefSeq" id="WP_012207958.1">
    <property type="nucleotide sequence ID" value="NC_010003.1"/>
</dbReference>
<dbReference type="SMR" id="A9BEX3"/>
<dbReference type="STRING" id="403833.Pmob_0102"/>
<dbReference type="KEGG" id="pmo:Pmob_0102"/>
<dbReference type="eggNOG" id="COG0172">
    <property type="taxonomic scope" value="Bacteria"/>
</dbReference>
<dbReference type="HOGENOM" id="CLU_023797_1_1_0"/>
<dbReference type="OrthoDB" id="9804647at2"/>
<dbReference type="UniPathway" id="UPA00906">
    <property type="reaction ID" value="UER00895"/>
</dbReference>
<dbReference type="Proteomes" id="UP000000789">
    <property type="component" value="Chromosome"/>
</dbReference>
<dbReference type="GO" id="GO:0005737">
    <property type="term" value="C:cytoplasm"/>
    <property type="evidence" value="ECO:0007669"/>
    <property type="project" value="UniProtKB-SubCell"/>
</dbReference>
<dbReference type="GO" id="GO:0005524">
    <property type="term" value="F:ATP binding"/>
    <property type="evidence" value="ECO:0007669"/>
    <property type="project" value="UniProtKB-UniRule"/>
</dbReference>
<dbReference type="GO" id="GO:0004828">
    <property type="term" value="F:serine-tRNA ligase activity"/>
    <property type="evidence" value="ECO:0007669"/>
    <property type="project" value="UniProtKB-UniRule"/>
</dbReference>
<dbReference type="GO" id="GO:0016260">
    <property type="term" value="P:selenocysteine biosynthetic process"/>
    <property type="evidence" value="ECO:0007669"/>
    <property type="project" value="UniProtKB-UniRule"/>
</dbReference>
<dbReference type="GO" id="GO:0006434">
    <property type="term" value="P:seryl-tRNA aminoacylation"/>
    <property type="evidence" value="ECO:0007669"/>
    <property type="project" value="UniProtKB-UniRule"/>
</dbReference>
<dbReference type="CDD" id="cd00770">
    <property type="entry name" value="SerRS_core"/>
    <property type="match status" value="1"/>
</dbReference>
<dbReference type="Gene3D" id="3.30.930.10">
    <property type="entry name" value="Bira Bifunctional Protein, Domain 2"/>
    <property type="match status" value="1"/>
</dbReference>
<dbReference type="Gene3D" id="1.10.287.40">
    <property type="entry name" value="Serine-tRNA synthetase, tRNA binding domain"/>
    <property type="match status" value="1"/>
</dbReference>
<dbReference type="HAMAP" id="MF_00176">
    <property type="entry name" value="Ser_tRNA_synth_type1"/>
    <property type="match status" value="1"/>
</dbReference>
<dbReference type="InterPro" id="IPR002314">
    <property type="entry name" value="aa-tRNA-synt_IIb"/>
</dbReference>
<dbReference type="InterPro" id="IPR006195">
    <property type="entry name" value="aa-tRNA-synth_II"/>
</dbReference>
<dbReference type="InterPro" id="IPR045864">
    <property type="entry name" value="aa-tRNA-synth_II/BPL/LPL"/>
</dbReference>
<dbReference type="InterPro" id="IPR002317">
    <property type="entry name" value="Ser-tRNA-ligase_type_1"/>
</dbReference>
<dbReference type="InterPro" id="IPR015866">
    <property type="entry name" value="Ser-tRNA-synth_1_N"/>
</dbReference>
<dbReference type="InterPro" id="IPR042103">
    <property type="entry name" value="SerRS_1_N_sf"/>
</dbReference>
<dbReference type="InterPro" id="IPR033729">
    <property type="entry name" value="SerRS_core"/>
</dbReference>
<dbReference type="InterPro" id="IPR010978">
    <property type="entry name" value="tRNA-bd_arm"/>
</dbReference>
<dbReference type="NCBIfam" id="TIGR00414">
    <property type="entry name" value="serS"/>
    <property type="match status" value="1"/>
</dbReference>
<dbReference type="PANTHER" id="PTHR43697:SF1">
    <property type="entry name" value="SERINE--TRNA LIGASE"/>
    <property type="match status" value="1"/>
</dbReference>
<dbReference type="PANTHER" id="PTHR43697">
    <property type="entry name" value="SERYL-TRNA SYNTHETASE"/>
    <property type="match status" value="1"/>
</dbReference>
<dbReference type="Pfam" id="PF02403">
    <property type="entry name" value="Seryl_tRNA_N"/>
    <property type="match status" value="1"/>
</dbReference>
<dbReference type="Pfam" id="PF00587">
    <property type="entry name" value="tRNA-synt_2b"/>
    <property type="match status" value="1"/>
</dbReference>
<dbReference type="PIRSF" id="PIRSF001529">
    <property type="entry name" value="Ser-tRNA-synth_IIa"/>
    <property type="match status" value="1"/>
</dbReference>
<dbReference type="PRINTS" id="PR00981">
    <property type="entry name" value="TRNASYNTHSER"/>
</dbReference>
<dbReference type="SUPFAM" id="SSF55681">
    <property type="entry name" value="Class II aaRS and biotin synthetases"/>
    <property type="match status" value="1"/>
</dbReference>
<dbReference type="SUPFAM" id="SSF46589">
    <property type="entry name" value="tRNA-binding arm"/>
    <property type="match status" value="1"/>
</dbReference>
<dbReference type="PROSITE" id="PS50862">
    <property type="entry name" value="AA_TRNA_LIGASE_II"/>
    <property type="match status" value="1"/>
</dbReference>
<keyword id="KW-0030">Aminoacyl-tRNA synthetase</keyword>
<keyword id="KW-0067">ATP-binding</keyword>
<keyword id="KW-0963">Cytoplasm</keyword>
<keyword id="KW-0436">Ligase</keyword>
<keyword id="KW-0547">Nucleotide-binding</keyword>
<keyword id="KW-0648">Protein biosynthesis</keyword>
<protein>
    <recommendedName>
        <fullName evidence="1">Serine--tRNA ligase</fullName>
        <ecNumber evidence="1">6.1.1.11</ecNumber>
    </recommendedName>
    <alternativeName>
        <fullName evidence="1">Seryl-tRNA synthetase</fullName>
        <shortName evidence="1">SerRS</shortName>
    </alternativeName>
    <alternativeName>
        <fullName evidence="1">Seryl-tRNA(Ser/Sec) synthetase</fullName>
    </alternativeName>
</protein>
<accession>A9BEX3</accession>
<gene>
    <name evidence="1" type="primary">serS</name>
    <name type="ordered locus">Pmob_0102</name>
</gene>
<reference key="1">
    <citation type="submission" date="2007-11" db="EMBL/GenBank/DDBJ databases">
        <title>Complete sequence of Petroga mobilis SJ95.</title>
        <authorList>
            <consortium name="US DOE Joint Genome Institute"/>
            <person name="Copeland A."/>
            <person name="Lucas S."/>
            <person name="Lapidus A."/>
            <person name="Barry K."/>
            <person name="Glavina del Rio T."/>
            <person name="Dalin E."/>
            <person name="Tice H."/>
            <person name="Pitluck S."/>
            <person name="Meincke L."/>
            <person name="Brettin T."/>
            <person name="Bruce D."/>
            <person name="Detter J.C."/>
            <person name="Han C."/>
            <person name="Kuske C.R."/>
            <person name="Schmutz J."/>
            <person name="Larimer F."/>
            <person name="Land M."/>
            <person name="Hauser L."/>
            <person name="Kyrpides N."/>
            <person name="Mikhailova N."/>
            <person name="Noll K."/>
            <person name="Richardson P."/>
        </authorList>
    </citation>
    <scope>NUCLEOTIDE SEQUENCE [LARGE SCALE GENOMIC DNA]</scope>
    <source>
        <strain>DSM 10674 / SJ95</strain>
    </source>
</reference>
<sequence>MLDLKYIRENPQEIKEALTKRNNETSIIDEIISFDEERRKLLQQIETLRAQRNQNSKLVAKLKAQKKNDEAEEIIIQGKEISEQIKNLESDLKNIEDNLNYKLLCVPNIPDSGVPVGKDENENLEVRRWGKPREFDFEPKAHWDLGTELNLLDFDRAAKLSGSRFTILKGDIARLELALINFMIDLHTKDHGYTFILPPHLVTKETITSSGQLPKFEDDLYKTSLDQMYLISTAEVSLAGLHRNETLEFNSLPLKYVAYTPCYRREAGSYGKDVRGMIRQHQFDKVELFWYTTPEESSQALEELTSHAEKVLQLLNLPYRVVALCTGDLGFAAAKTYDLEVWLPSYNDYKEISSCSNTKDFQGRRGNIRYRDRENKLNFVHTLNGSGLAVGRTLVAIMENYQTANGKIEIPEKLIPYMGKEFIG</sequence>
<evidence type="ECO:0000255" key="1">
    <source>
        <dbReference type="HAMAP-Rule" id="MF_00176"/>
    </source>
</evidence>
<name>SYS_PETMO</name>
<feature type="chain" id="PRO_1000077205" description="Serine--tRNA ligase">
    <location>
        <begin position="1"/>
        <end position="424"/>
    </location>
</feature>
<feature type="binding site" evidence="1">
    <location>
        <begin position="233"/>
        <end position="235"/>
    </location>
    <ligand>
        <name>L-serine</name>
        <dbReference type="ChEBI" id="CHEBI:33384"/>
    </ligand>
</feature>
<feature type="binding site" evidence="1">
    <location>
        <begin position="264"/>
        <end position="266"/>
    </location>
    <ligand>
        <name>ATP</name>
        <dbReference type="ChEBI" id="CHEBI:30616"/>
    </ligand>
</feature>
<feature type="binding site" evidence="1">
    <location>
        <position position="287"/>
    </location>
    <ligand>
        <name>L-serine</name>
        <dbReference type="ChEBI" id="CHEBI:33384"/>
    </ligand>
</feature>
<feature type="binding site" evidence="1">
    <location>
        <begin position="351"/>
        <end position="354"/>
    </location>
    <ligand>
        <name>ATP</name>
        <dbReference type="ChEBI" id="CHEBI:30616"/>
    </ligand>
</feature>
<feature type="binding site" evidence="1">
    <location>
        <position position="386"/>
    </location>
    <ligand>
        <name>L-serine</name>
        <dbReference type="ChEBI" id="CHEBI:33384"/>
    </ligand>
</feature>
<organism>
    <name type="scientific">Petrotoga mobilis (strain DSM 10674 / SJ95)</name>
    <dbReference type="NCBI Taxonomy" id="403833"/>
    <lineage>
        <taxon>Bacteria</taxon>
        <taxon>Thermotogati</taxon>
        <taxon>Thermotogota</taxon>
        <taxon>Thermotogae</taxon>
        <taxon>Petrotogales</taxon>
        <taxon>Petrotogaceae</taxon>
        <taxon>Petrotoga</taxon>
    </lineage>
</organism>
<proteinExistence type="inferred from homology"/>